<accession>Q049F3</accession>
<organism>
    <name type="scientific">Lactobacillus delbrueckii subsp. bulgaricus (strain ATCC BAA-365 / Lb-18)</name>
    <dbReference type="NCBI Taxonomy" id="321956"/>
    <lineage>
        <taxon>Bacteria</taxon>
        <taxon>Bacillati</taxon>
        <taxon>Bacillota</taxon>
        <taxon>Bacilli</taxon>
        <taxon>Lactobacillales</taxon>
        <taxon>Lactobacillaceae</taxon>
        <taxon>Lactobacillus</taxon>
    </lineage>
</organism>
<comment type="function">
    <text evidence="2">Involved in base excision repair of DNA damaged by oxidation or by mutagenic agents. Acts as a DNA glycosylase that recognizes and removes damaged bases. Has a preference for oxidized purines, such as 7,8-dihydro-8-oxoguanine (8-oxoG). Has AP (apurinic/apyrimidinic) lyase activity and introduces nicks in the DNA strand. Cleaves the DNA backbone by beta-delta elimination to generate a single-strand break at the site of the removed base with both 3'- and 5'-phosphates.</text>
</comment>
<comment type="catalytic activity">
    <reaction evidence="2">
        <text>Hydrolysis of DNA containing ring-opened 7-methylguanine residues, releasing 2,6-diamino-4-hydroxy-5-(N-methyl)formamidopyrimidine.</text>
        <dbReference type="EC" id="3.2.2.23"/>
    </reaction>
</comment>
<comment type="catalytic activity">
    <reaction evidence="2">
        <text>2'-deoxyribonucleotide-(2'-deoxyribose 5'-phosphate)-2'-deoxyribonucleotide-DNA = a 3'-end 2'-deoxyribonucleotide-(2,3-dehydro-2,3-deoxyribose 5'-phosphate)-DNA + a 5'-end 5'-phospho-2'-deoxyribonucleoside-DNA + H(+)</text>
        <dbReference type="Rhea" id="RHEA:66592"/>
        <dbReference type="Rhea" id="RHEA-COMP:13180"/>
        <dbReference type="Rhea" id="RHEA-COMP:16897"/>
        <dbReference type="Rhea" id="RHEA-COMP:17067"/>
        <dbReference type="ChEBI" id="CHEBI:15378"/>
        <dbReference type="ChEBI" id="CHEBI:136412"/>
        <dbReference type="ChEBI" id="CHEBI:157695"/>
        <dbReference type="ChEBI" id="CHEBI:167181"/>
        <dbReference type="EC" id="4.2.99.18"/>
    </reaction>
</comment>
<comment type="cofactor">
    <cofactor evidence="2">
        <name>Zn(2+)</name>
        <dbReference type="ChEBI" id="CHEBI:29105"/>
    </cofactor>
    <text evidence="2">Binds 1 zinc ion per subunit.</text>
</comment>
<comment type="subunit">
    <text evidence="2">Monomer.</text>
</comment>
<comment type="similarity">
    <text evidence="2">Belongs to the FPG family.</text>
</comment>
<reference key="1">
    <citation type="journal article" date="2006" name="Proc. Natl. Acad. Sci. U.S.A.">
        <title>Comparative genomics of the lactic acid bacteria.</title>
        <authorList>
            <person name="Makarova K.S."/>
            <person name="Slesarev A."/>
            <person name="Wolf Y.I."/>
            <person name="Sorokin A."/>
            <person name="Mirkin B."/>
            <person name="Koonin E.V."/>
            <person name="Pavlov A."/>
            <person name="Pavlova N."/>
            <person name="Karamychev V."/>
            <person name="Polouchine N."/>
            <person name="Shakhova V."/>
            <person name="Grigoriev I."/>
            <person name="Lou Y."/>
            <person name="Rohksar D."/>
            <person name="Lucas S."/>
            <person name="Huang K."/>
            <person name="Goodstein D.M."/>
            <person name="Hawkins T."/>
            <person name="Plengvidhya V."/>
            <person name="Welker D."/>
            <person name="Hughes J."/>
            <person name="Goh Y."/>
            <person name="Benson A."/>
            <person name="Baldwin K."/>
            <person name="Lee J.-H."/>
            <person name="Diaz-Muniz I."/>
            <person name="Dosti B."/>
            <person name="Smeianov V."/>
            <person name="Wechter W."/>
            <person name="Barabote R."/>
            <person name="Lorca G."/>
            <person name="Altermann E."/>
            <person name="Barrangou R."/>
            <person name="Ganesan B."/>
            <person name="Xie Y."/>
            <person name="Rawsthorne H."/>
            <person name="Tamir D."/>
            <person name="Parker C."/>
            <person name="Breidt F."/>
            <person name="Broadbent J.R."/>
            <person name="Hutkins R."/>
            <person name="O'Sullivan D."/>
            <person name="Steele J."/>
            <person name="Unlu G."/>
            <person name="Saier M.H. Jr."/>
            <person name="Klaenhammer T."/>
            <person name="Richardson P."/>
            <person name="Kozyavkin S."/>
            <person name="Weimer B.C."/>
            <person name="Mills D.A."/>
        </authorList>
    </citation>
    <scope>NUCLEOTIDE SEQUENCE [LARGE SCALE GENOMIC DNA]</scope>
    <source>
        <strain>ATCC BAA-365 / Lb-18</strain>
    </source>
</reference>
<feature type="initiator methionine" description="Removed" evidence="1">
    <location>
        <position position="1"/>
    </location>
</feature>
<feature type="chain" id="PRO_1000008709" description="Formamidopyrimidine-DNA glycosylase">
    <location>
        <begin position="2"/>
        <end position="273"/>
    </location>
</feature>
<feature type="zinc finger region" description="FPG-type" evidence="2">
    <location>
        <begin position="238"/>
        <end position="272"/>
    </location>
</feature>
<feature type="active site" description="Schiff-base intermediate with DNA" evidence="2">
    <location>
        <position position="2"/>
    </location>
</feature>
<feature type="active site" description="Proton donor" evidence="2">
    <location>
        <position position="3"/>
    </location>
</feature>
<feature type="active site" description="Proton donor; for beta-elimination activity" evidence="2">
    <location>
        <position position="58"/>
    </location>
</feature>
<feature type="active site" description="Proton donor; for delta-elimination activity" evidence="2">
    <location>
        <position position="262"/>
    </location>
</feature>
<feature type="binding site" evidence="2">
    <location>
        <position position="91"/>
    </location>
    <ligand>
        <name>DNA</name>
        <dbReference type="ChEBI" id="CHEBI:16991"/>
    </ligand>
</feature>
<feature type="binding site" evidence="2">
    <location>
        <position position="110"/>
    </location>
    <ligand>
        <name>DNA</name>
        <dbReference type="ChEBI" id="CHEBI:16991"/>
    </ligand>
</feature>
<feature type="binding site" evidence="2">
    <location>
        <position position="153"/>
    </location>
    <ligand>
        <name>DNA</name>
        <dbReference type="ChEBI" id="CHEBI:16991"/>
    </ligand>
</feature>
<name>FPG_LACDB</name>
<proteinExistence type="inferred from homology"/>
<evidence type="ECO:0000250" key="1"/>
<evidence type="ECO:0000255" key="2">
    <source>
        <dbReference type="HAMAP-Rule" id="MF_00103"/>
    </source>
</evidence>
<gene>
    <name evidence="2" type="primary">mutM</name>
    <name evidence="2" type="synonym">fpg</name>
    <name type="ordered locus">LBUL_1406</name>
</gene>
<keyword id="KW-0227">DNA damage</keyword>
<keyword id="KW-0234">DNA repair</keyword>
<keyword id="KW-0238">DNA-binding</keyword>
<keyword id="KW-0326">Glycosidase</keyword>
<keyword id="KW-0378">Hydrolase</keyword>
<keyword id="KW-0456">Lyase</keyword>
<keyword id="KW-0479">Metal-binding</keyword>
<keyword id="KW-0511">Multifunctional enzyme</keyword>
<keyword id="KW-0862">Zinc</keyword>
<keyword id="KW-0863">Zinc-finger</keyword>
<protein>
    <recommendedName>
        <fullName evidence="2">Formamidopyrimidine-DNA glycosylase</fullName>
        <shortName evidence="2">Fapy-DNA glycosylase</shortName>
        <ecNumber evidence="2">3.2.2.23</ecNumber>
    </recommendedName>
    <alternativeName>
        <fullName evidence="2">DNA-(apurinic or apyrimidinic site) lyase MutM</fullName>
        <shortName evidence="2">AP lyase MutM</shortName>
        <ecNumber evidence="2">4.2.99.18</ecNumber>
    </alternativeName>
</protein>
<sequence>MPEMPEVETVRRTLRPLVVGKTIDHVDIWYDKVITGDPETFKRELKGKTFTVVDRYAKFLLFRLGDLTVVSHLRMEGKYHLTTWDAPVDKHEHLQFAFTDGSSLRYADVRKFGRLQLVETGTEFQVTGLKNLGVEANSPEFRLDYFEKGLKKRSMNIKSLLMSQTLVAGLGNIYVDEVLWQSRINPLTPANELTKDQVKQLHSAINETIEEATKYGGTTVHSFLNAEGGAGHYQEKLKVYGKEGQPCPRCGEDFVKIKICGRGTTYCLHCQKR</sequence>
<dbReference type="EC" id="3.2.2.23" evidence="2"/>
<dbReference type="EC" id="4.2.99.18" evidence="2"/>
<dbReference type="EMBL" id="CP000412">
    <property type="protein sequence ID" value="ABJ58919.1"/>
    <property type="molecule type" value="Genomic_DNA"/>
</dbReference>
<dbReference type="RefSeq" id="WP_011678452.1">
    <property type="nucleotide sequence ID" value="NC_008529.1"/>
</dbReference>
<dbReference type="SMR" id="Q049F3"/>
<dbReference type="KEGG" id="lbu:LBUL_1406"/>
<dbReference type="HOGENOM" id="CLU_038423_1_3_9"/>
<dbReference type="BioCyc" id="LDEL321956:LBUL_RS06620-MONOMER"/>
<dbReference type="GO" id="GO:0034039">
    <property type="term" value="F:8-oxo-7,8-dihydroguanine DNA N-glycosylase activity"/>
    <property type="evidence" value="ECO:0007669"/>
    <property type="project" value="TreeGrafter"/>
</dbReference>
<dbReference type="GO" id="GO:0140078">
    <property type="term" value="F:class I DNA-(apurinic or apyrimidinic site) endonuclease activity"/>
    <property type="evidence" value="ECO:0007669"/>
    <property type="project" value="UniProtKB-EC"/>
</dbReference>
<dbReference type="GO" id="GO:0003684">
    <property type="term" value="F:damaged DNA binding"/>
    <property type="evidence" value="ECO:0007669"/>
    <property type="project" value="InterPro"/>
</dbReference>
<dbReference type="GO" id="GO:0008270">
    <property type="term" value="F:zinc ion binding"/>
    <property type="evidence" value="ECO:0007669"/>
    <property type="project" value="UniProtKB-UniRule"/>
</dbReference>
<dbReference type="GO" id="GO:0006284">
    <property type="term" value="P:base-excision repair"/>
    <property type="evidence" value="ECO:0007669"/>
    <property type="project" value="InterPro"/>
</dbReference>
<dbReference type="CDD" id="cd08966">
    <property type="entry name" value="EcFpg-like_N"/>
    <property type="match status" value="1"/>
</dbReference>
<dbReference type="FunFam" id="1.10.8.50:FF:000003">
    <property type="entry name" value="Formamidopyrimidine-DNA glycosylase"/>
    <property type="match status" value="1"/>
</dbReference>
<dbReference type="Gene3D" id="1.10.8.50">
    <property type="match status" value="1"/>
</dbReference>
<dbReference type="Gene3D" id="3.20.190.10">
    <property type="entry name" value="MutM-like, N-terminal"/>
    <property type="match status" value="1"/>
</dbReference>
<dbReference type="HAMAP" id="MF_00103">
    <property type="entry name" value="Fapy_DNA_glycosyl"/>
    <property type="match status" value="1"/>
</dbReference>
<dbReference type="InterPro" id="IPR015886">
    <property type="entry name" value="DNA_glyclase/AP_lyase_DNA-bd"/>
</dbReference>
<dbReference type="InterPro" id="IPR020629">
    <property type="entry name" value="Formamido-pyr_DNA_Glyclase"/>
</dbReference>
<dbReference type="InterPro" id="IPR012319">
    <property type="entry name" value="FPG_cat"/>
</dbReference>
<dbReference type="InterPro" id="IPR035937">
    <property type="entry name" value="MutM-like_N-ter"/>
</dbReference>
<dbReference type="InterPro" id="IPR010979">
    <property type="entry name" value="Ribosomal_uS13-like_H2TH"/>
</dbReference>
<dbReference type="InterPro" id="IPR000214">
    <property type="entry name" value="Znf_DNA_glyclase/AP_lyase"/>
</dbReference>
<dbReference type="InterPro" id="IPR010663">
    <property type="entry name" value="Znf_FPG/IleRS"/>
</dbReference>
<dbReference type="NCBIfam" id="TIGR00577">
    <property type="entry name" value="fpg"/>
    <property type="match status" value="1"/>
</dbReference>
<dbReference type="NCBIfam" id="NF002211">
    <property type="entry name" value="PRK01103.1"/>
    <property type="match status" value="1"/>
</dbReference>
<dbReference type="PANTHER" id="PTHR22993">
    <property type="entry name" value="FORMAMIDOPYRIMIDINE-DNA GLYCOSYLASE"/>
    <property type="match status" value="1"/>
</dbReference>
<dbReference type="PANTHER" id="PTHR22993:SF9">
    <property type="entry name" value="FORMAMIDOPYRIMIDINE-DNA GLYCOSYLASE"/>
    <property type="match status" value="1"/>
</dbReference>
<dbReference type="Pfam" id="PF01149">
    <property type="entry name" value="Fapy_DNA_glyco"/>
    <property type="match status" value="1"/>
</dbReference>
<dbReference type="Pfam" id="PF06831">
    <property type="entry name" value="H2TH"/>
    <property type="match status" value="1"/>
</dbReference>
<dbReference type="Pfam" id="PF06827">
    <property type="entry name" value="zf-FPG_IleRS"/>
    <property type="match status" value="1"/>
</dbReference>
<dbReference type="SMART" id="SM00898">
    <property type="entry name" value="Fapy_DNA_glyco"/>
    <property type="match status" value="1"/>
</dbReference>
<dbReference type="SMART" id="SM01232">
    <property type="entry name" value="H2TH"/>
    <property type="match status" value="1"/>
</dbReference>
<dbReference type="SUPFAM" id="SSF57716">
    <property type="entry name" value="Glucocorticoid receptor-like (DNA-binding domain)"/>
    <property type="match status" value="1"/>
</dbReference>
<dbReference type="SUPFAM" id="SSF81624">
    <property type="entry name" value="N-terminal domain of MutM-like DNA repair proteins"/>
    <property type="match status" value="1"/>
</dbReference>
<dbReference type="SUPFAM" id="SSF46946">
    <property type="entry name" value="S13-like H2TH domain"/>
    <property type="match status" value="1"/>
</dbReference>
<dbReference type="PROSITE" id="PS51068">
    <property type="entry name" value="FPG_CAT"/>
    <property type="match status" value="1"/>
</dbReference>
<dbReference type="PROSITE" id="PS51066">
    <property type="entry name" value="ZF_FPG_2"/>
    <property type="match status" value="1"/>
</dbReference>